<proteinExistence type="inferred from homology"/>
<protein>
    <recommendedName>
        <fullName evidence="1">Urease accessory protein UreD</fullName>
    </recommendedName>
</protein>
<organism>
    <name type="scientific">Streptococcus salivarius (strain 57.I)</name>
    <dbReference type="NCBI Taxonomy" id="1046629"/>
    <lineage>
        <taxon>Bacteria</taxon>
        <taxon>Bacillati</taxon>
        <taxon>Bacillota</taxon>
        <taxon>Bacilli</taxon>
        <taxon>Lactobacillales</taxon>
        <taxon>Streptococcaceae</taxon>
        <taxon>Streptococcus</taxon>
    </lineage>
</organism>
<comment type="function">
    <text evidence="1">Required for maturation of urease via the functional incorporation of the urease nickel metallocenter.</text>
</comment>
<comment type="subunit">
    <text evidence="1">UreD, UreF and UreG form a complex that acts as a GTP-hydrolysis-dependent molecular chaperone, activating the urease apoprotein by helping to assemble the nickel containing metallocenter of UreC. The UreE protein probably delivers the nickel.</text>
</comment>
<comment type="subcellular location">
    <subcellularLocation>
        <location evidence="1">Cytoplasm</location>
    </subcellularLocation>
</comment>
<comment type="similarity">
    <text evidence="1">Belongs to the UreD family.</text>
</comment>
<evidence type="ECO:0000255" key="1">
    <source>
        <dbReference type="HAMAP-Rule" id="MF_01384"/>
    </source>
</evidence>
<reference key="1">
    <citation type="journal article" date="1996" name="Infect. Immun.">
        <title>Streptococcus salivarius urease: genetic and biochemical characterization and expression in a dental plaque streptococcus.</title>
        <authorList>
            <person name="Chen Y.-Y.M."/>
            <person name="Clancy K.A."/>
            <person name="Burne R.A."/>
        </authorList>
    </citation>
    <scope>NUCLEOTIDE SEQUENCE [GENOMIC DNA]</scope>
    <source>
        <strain>57.I</strain>
    </source>
</reference>
<reference key="2">
    <citation type="journal article" date="2011" name="J. Bacteriol.">
        <title>Complete genome sequence of the ureolytic Streptococcus salivarius strain 57.I.</title>
        <authorList>
            <person name="Geng J."/>
            <person name="Huang S.C."/>
            <person name="Li S."/>
            <person name="Hu S."/>
            <person name="Chen Y.Y."/>
        </authorList>
    </citation>
    <scope>NUCLEOTIDE SEQUENCE [LARGE SCALE GENOMIC DNA]</scope>
    <source>
        <strain>57.I</strain>
    </source>
</reference>
<keyword id="KW-0143">Chaperone</keyword>
<keyword id="KW-0963">Cytoplasm</keyword>
<keyword id="KW-0996">Nickel insertion</keyword>
<sequence length="279" mass="32316">MTQAYDGFVHLGFSNRNGRTISHKKYQEGNSRVSADNSDANGVPYYFLINMGGGFVEGEQYQVTIDVNKDAHALVTTQTPTYVYKCEKGQLTHQNTSITLEENSYLEYMADEVIPYLRSRYFQTSRIDMDKSAHLIYSDGVTAGWSHEDLPFQYHYFRNLTQIYQDDELVYSDQTLLEPQKQDMFKLGYFEGWRNYNSLVMVSPNIDEAFVKALQKHLENLNLESDFAISSLDIPGLVLRILGKTAEDNRRVIYSCADYFRQEIHGLTPLNLRKNDMRR</sequence>
<accession>Q55058</accession>
<accession>F8HGJ6</accession>
<gene>
    <name evidence="1" type="primary">ureD</name>
    <name type="ordered locus">Ssal_01895</name>
</gene>
<feature type="chain" id="PRO_0000067615" description="Urease accessory protein UreD">
    <location>
        <begin position="1"/>
        <end position="279"/>
    </location>
</feature>
<name>URED_STRE5</name>
<dbReference type="EMBL" id="U35248">
    <property type="protein sequence ID" value="AAC43568.1"/>
    <property type="molecule type" value="Genomic_DNA"/>
</dbReference>
<dbReference type="EMBL" id="CP002888">
    <property type="protein sequence ID" value="AEJ54132.1"/>
    <property type="molecule type" value="Genomic_DNA"/>
</dbReference>
<dbReference type="RefSeq" id="WP_014633609.1">
    <property type="nucleotide sequence ID" value="NC_017594.1"/>
</dbReference>
<dbReference type="SMR" id="Q55058"/>
<dbReference type="KEGG" id="stf:Ssal_01895"/>
<dbReference type="PATRIC" id="fig|1046629.4.peg.1682"/>
<dbReference type="eggNOG" id="COG0829">
    <property type="taxonomic scope" value="Bacteria"/>
</dbReference>
<dbReference type="GO" id="GO:0005737">
    <property type="term" value="C:cytoplasm"/>
    <property type="evidence" value="ECO:0007669"/>
    <property type="project" value="UniProtKB-SubCell"/>
</dbReference>
<dbReference type="GO" id="GO:0016151">
    <property type="term" value="F:nickel cation binding"/>
    <property type="evidence" value="ECO:0007669"/>
    <property type="project" value="UniProtKB-UniRule"/>
</dbReference>
<dbReference type="HAMAP" id="MF_01384">
    <property type="entry name" value="UreD"/>
    <property type="match status" value="1"/>
</dbReference>
<dbReference type="InterPro" id="IPR002669">
    <property type="entry name" value="UreD"/>
</dbReference>
<dbReference type="PANTHER" id="PTHR33643">
    <property type="entry name" value="UREASE ACCESSORY PROTEIN D"/>
    <property type="match status" value="1"/>
</dbReference>
<dbReference type="PANTHER" id="PTHR33643:SF1">
    <property type="entry name" value="UREASE ACCESSORY PROTEIN D"/>
    <property type="match status" value="1"/>
</dbReference>
<dbReference type="Pfam" id="PF01774">
    <property type="entry name" value="UreD"/>
    <property type="match status" value="1"/>
</dbReference>